<evidence type="ECO:0000255" key="1">
    <source>
        <dbReference type="HAMAP-Rule" id="MF_01338"/>
    </source>
</evidence>
<protein>
    <recommendedName>
        <fullName evidence="1">Ribulose bisphosphate carboxylase large chain</fullName>
        <shortName evidence="1">RuBisCO large subunit</shortName>
        <ecNumber evidence="1">4.1.1.39</ecNumber>
    </recommendedName>
</protein>
<accession>Q06021</accession>
<proteinExistence type="inferred from homology"/>
<dbReference type="EC" id="4.1.1.39" evidence="1"/>
<dbReference type="EMBL" id="X56618">
    <property type="protein sequence ID" value="CAA39956.1"/>
    <property type="molecule type" value="Genomic_DNA"/>
</dbReference>
<dbReference type="SMR" id="Q06021"/>
<dbReference type="GO" id="GO:0009507">
    <property type="term" value="C:chloroplast"/>
    <property type="evidence" value="ECO:0007669"/>
    <property type="project" value="UniProtKB-SubCell"/>
</dbReference>
<dbReference type="GO" id="GO:0000287">
    <property type="term" value="F:magnesium ion binding"/>
    <property type="evidence" value="ECO:0007669"/>
    <property type="project" value="UniProtKB-UniRule"/>
</dbReference>
<dbReference type="GO" id="GO:0004497">
    <property type="term" value="F:monooxygenase activity"/>
    <property type="evidence" value="ECO:0007669"/>
    <property type="project" value="UniProtKB-KW"/>
</dbReference>
<dbReference type="GO" id="GO:0016984">
    <property type="term" value="F:ribulose-bisphosphate carboxylase activity"/>
    <property type="evidence" value="ECO:0007669"/>
    <property type="project" value="UniProtKB-UniRule"/>
</dbReference>
<dbReference type="GO" id="GO:0009853">
    <property type="term" value="P:photorespiration"/>
    <property type="evidence" value="ECO:0007669"/>
    <property type="project" value="UniProtKB-KW"/>
</dbReference>
<dbReference type="GO" id="GO:0019253">
    <property type="term" value="P:reductive pentose-phosphate cycle"/>
    <property type="evidence" value="ECO:0007669"/>
    <property type="project" value="UniProtKB-UniRule"/>
</dbReference>
<dbReference type="CDD" id="cd08212">
    <property type="entry name" value="RuBisCO_large_I"/>
    <property type="match status" value="1"/>
</dbReference>
<dbReference type="FunFam" id="3.20.20.110:FF:000001">
    <property type="entry name" value="Ribulose bisphosphate carboxylase large chain"/>
    <property type="match status" value="1"/>
</dbReference>
<dbReference type="FunFam" id="3.30.70.150:FF:000001">
    <property type="entry name" value="Ribulose bisphosphate carboxylase large chain"/>
    <property type="match status" value="1"/>
</dbReference>
<dbReference type="Gene3D" id="3.20.20.110">
    <property type="entry name" value="Ribulose bisphosphate carboxylase, large subunit, C-terminal domain"/>
    <property type="match status" value="1"/>
</dbReference>
<dbReference type="Gene3D" id="3.30.70.150">
    <property type="entry name" value="RuBisCO large subunit, N-terminal domain"/>
    <property type="match status" value="1"/>
</dbReference>
<dbReference type="HAMAP" id="MF_01338">
    <property type="entry name" value="RuBisCO_L_type1"/>
    <property type="match status" value="1"/>
</dbReference>
<dbReference type="InterPro" id="IPR033966">
    <property type="entry name" value="RuBisCO"/>
</dbReference>
<dbReference type="InterPro" id="IPR020878">
    <property type="entry name" value="RuBisCo_large_chain_AS"/>
</dbReference>
<dbReference type="InterPro" id="IPR000685">
    <property type="entry name" value="RuBisCO_lsu_C"/>
</dbReference>
<dbReference type="InterPro" id="IPR036376">
    <property type="entry name" value="RuBisCO_lsu_C_sf"/>
</dbReference>
<dbReference type="InterPro" id="IPR017443">
    <property type="entry name" value="RuBisCO_lsu_fd_N"/>
</dbReference>
<dbReference type="InterPro" id="IPR036422">
    <property type="entry name" value="RuBisCO_lsu_N_sf"/>
</dbReference>
<dbReference type="InterPro" id="IPR020888">
    <property type="entry name" value="RuBisCO_lsuI"/>
</dbReference>
<dbReference type="NCBIfam" id="NF003252">
    <property type="entry name" value="PRK04208.1"/>
    <property type="match status" value="1"/>
</dbReference>
<dbReference type="PANTHER" id="PTHR42704">
    <property type="entry name" value="RIBULOSE BISPHOSPHATE CARBOXYLASE"/>
    <property type="match status" value="1"/>
</dbReference>
<dbReference type="PANTHER" id="PTHR42704:SF15">
    <property type="entry name" value="RIBULOSE BISPHOSPHATE CARBOXYLASE LARGE CHAIN"/>
    <property type="match status" value="1"/>
</dbReference>
<dbReference type="Pfam" id="PF00016">
    <property type="entry name" value="RuBisCO_large"/>
    <property type="match status" value="1"/>
</dbReference>
<dbReference type="Pfam" id="PF02788">
    <property type="entry name" value="RuBisCO_large_N"/>
    <property type="match status" value="1"/>
</dbReference>
<dbReference type="SFLD" id="SFLDG01052">
    <property type="entry name" value="RuBisCO"/>
    <property type="match status" value="1"/>
</dbReference>
<dbReference type="SFLD" id="SFLDS00014">
    <property type="entry name" value="RuBisCO"/>
    <property type="match status" value="1"/>
</dbReference>
<dbReference type="SFLD" id="SFLDG00301">
    <property type="entry name" value="RuBisCO-like_proteins"/>
    <property type="match status" value="1"/>
</dbReference>
<dbReference type="SUPFAM" id="SSF51649">
    <property type="entry name" value="RuBisCo, C-terminal domain"/>
    <property type="match status" value="1"/>
</dbReference>
<dbReference type="SUPFAM" id="SSF54966">
    <property type="entry name" value="RuBisCO, large subunit, small (N-terminal) domain"/>
    <property type="match status" value="1"/>
</dbReference>
<dbReference type="PROSITE" id="PS00157">
    <property type="entry name" value="RUBISCO_LARGE"/>
    <property type="match status" value="1"/>
</dbReference>
<sequence>MSPQTETKASVGFKAGVKDYKLTYHTPDYETKDTDILAAFRVTPQPGVPPEEAGAAVAAESSTGTWTTVWTDGLTSLDRYKGRCYHIEPVAGEESQFIAYVAYPLDLFEEGSVTNMFTSIVGNVFGFKALRALRLEDLRIPPAYSKTFQGPPHGIQVERDKLNKYGRPLLGCTIKPKLGLSAKNYGRAVYECLRGGLDFTKDDENVNSQPFMRWRDRFLFCAEAIYKAQAETGEIKGHYLNATAGTCEEMMKRAVFARELGVPIVMHDYLTGGFTANTSLAHYCRDNGLLLHIHRAMHAVIDRQKNHGIHFRVLAKALRMSGGDHIHAGTVVGKLEGEREITLGFVDLLRDDYIEKDRSRGIYFTQDWVSLPGVLPVASGGIHVWHMPALTEIFGDDSVLQFGGGTLGHPWGNAPGAVANRVALEACVQARNEGRDLAREGNEIIREAAKWSPELAAACEVWKEIKFEFPAMDTL</sequence>
<comment type="function">
    <text evidence="1">RuBisCO catalyzes two reactions: the carboxylation of D-ribulose 1,5-bisphosphate, the primary event in carbon dioxide fixation, as well as the oxidative fragmentation of the pentose substrate in the photorespiration process. Both reactions occur simultaneously and in competition at the same active site.</text>
</comment>
<comment type="catalytic activity">
    <reaction evidence="1">
        <text>2 (2R)-3-phosphoglycerate + 2 H(+) = D-ribulose 1,5-bisphosphate + CO2 + H2O</text>
        <dbReference type="Rhea" id="RHEA:23124"/>
        <dbReference type="ChEBI" id="CHEBI:15377"/>
        <dbReference type="ChEBI" id="CHEBI:15378"/>
        <dbReference type="ChEBI" id="CHEBI:16526"/>
        <dbReference type="ChEBI" id="CHEBI:57870"/>
        <dbReference type="ChEBI" id="CHEBI:58272"/>
        <dbReference type="EC" id="4.1.1.39"/>
    </reaction>
</comment>
<comment type="catalytic activity">
    <reaction evidence="1">
        <text>D-ribulose 1,5-bisphosphate + O2 = 2-phosphoglycolate + (2R)-3-phosphoglycerate + 2 H(+)</text>
        <dbReference type="Rhea" id="RHEA:36631"/>
        <dbReference type="ChEBI" id="CHEBI:15378"/>
        <dbReference type="ChEBI" id="CHEBI:15379"/>
        <dbReference type="ChEBI" id="CHEBI:57870"/>
        <dbReference type="ChEBI" id="CHEBI:58033"/>
        <dbReference type="ChEBI" id="CHEBI:58272"/>
    </reaction>
</comment>
<comment type="cofactor">
    <cofactor evidence="1">
        <name>Mg(2+)</name>
        <dbReference type="ChEBI" id="CHEBI:18420"/>
    </cofactor>
    <text evidence="1">Binds 1 Mg(2+) ion per subunit.</text>
</comment>
<comment type="subunit">
    <text evidence="1">Heterohexadecamer of 8 large chains and 8 small chains; disulfide-linked. The disulfide link is formed within the large subunit homodimers.</text>
</comment>
<comment type="subcellular location">
    <subcellularLocation>
        <location>Plastid</location>
        <location>Chloroplast</location>
    </subcellularLocation>
</comment>
<comment type="PTM">
    <text evidence="1">The disulfide bond which can form in the large chain dimeric partners within the hexadecamer appears to be associated with oxidative stress and protein turnover.</text>
</comment>
<comment type="miscellaneous">
    <text evidence="1">The basic functional RuBisCO is composed of a large chain homodimer in a 'head-to-tail' conformation. In form I RuBisCO this homodimer is arranged in a barrel-like tetramer with the small subunits forming a tetrameric 'cap' on each end of the 'barrel'.</text>
</comment>
<comment type="similarity">
    <text evidence="1">Belongs to the RuBisCO large chain family. Type I subfamily.</text>
</comment>
<feature type="propeptide" id="PRO_0000031107" evidence="1">
    <location>
        <begin position="1"/>
        <end position="2"/>
    </location>
</feature>
<feature type="chain" id="PRO_0000031108" description="Ribulose bisphosphate carboxylase large chain">
    <location>
        <begin position="3"/>
        <end position="475"/>
    </location>
</feature>
<feature type="active site" description="Proton acceptor" evidence="1">
    <location>
        <position position="175"/>
    </location>
</feature>
<feature type="active site" description="Proton acceptor" evidence="1">
    <location>
        <position position="294"/>
    </location>
</feature>
<feature type="binding site" description="in homodimeric partner" evidence="1">
    <location>
        <position position="123"/>
    </location>
    <ligand>
        <name>substrate</name>
    </ligand>
</feature>
<feature type="binding site" evidence="1">
    <location>
        <position position="173"/>
    </location>
    <ligand>
        <name>substrate</name>
    </ligand>
</feature>
<feature type="binding site" evidence="1">
    <location>
        <position position="177"/>
    </location>
    <ligand>
        <name>substrate</name>
    </ligand>
</feature>
<feature type="binding site" description="via carbamate group" evidence="1">
    <location>
        <position position="201"/>
    </location>
    <ligand>
        <name>Mg(2+)</name>
        <dbReference type="ChEBI" id="CHEBI:18420"/>
    </ligand>
</feature>
<feature type="binding site" evidence="1">
    <location>
        <position position="203"/>
    </location>
    <ligand>
        <name>Mg(2+)</name>
        <dbReference type="ChEBI" id="CHEBI:18420"/>
    </ligand>
</feature>
<feature type="binding site" evidence="1">
    <location>
        <position position="204"/>
    </location>
    <ligand>
        <name>Mg(2+)</name>
        <dbReference type="ChEBI" id="CHEBI:18420"/>
    </ligand>
</feature>
<feature type="binding site" evidence="1">
    <location>
        <position position="295"/>
    </location>
    <ligand>
        <name>substrate</name>
    </ligand>
</feature>
<feature type="binding site" evidence="1">
    <location>
        <position position="327"/>
    </location>
    <ligand>
        <name>substrate</name>
    </ligand>
</feature>
<feature type="binding site" evidence="1">
    <location>
        <position position="379"/>
    </location>
    <ligand>
        <name>substrate</name>
    </ligand>
</feature>
<feature type="site" description="Transition state stabilizer" evidence="1">
    <location>
        <position position="334"/>
    </location>
</feature>
<feature type="modified residue" description="N-acetylproline" evidence="1">
    <location>
        <position position="3"/>
    </location>
</feature>
<feature type="modified residue" description="N6,N6,N6-trimethyllysine" evidence="1">
    <location>
        <position position="14"/>
    </location>
</feature>
<feature type="modified residue" description="N6-carboxylysine" evidence="1">
    <location>
        <position position="201"/>
    </location>
</feature>
<feature type="disulfide bond" description="Interchain; in linked form" evidence="1">
    <location>
        <position position="247"/>
    </location>
</feature>
<geneLocation type="chloroplast"/>
<organism>
    <name type="scientific">Alnus incana</name>
    <name type="common">White alder</name>
    <dbReference type="NCBI Taxonomy" id="3516"/>
    <lineage>
        <taxon>Eukaryota</taxon>
        <taxon>Viridiplantae</taxon>
        <taxon>Streptophyta</taxon>
        <taxon>Embryophyta</taxon>
        <taxon>Tracheophyta</taxon>
        <taxon>Spermatophyta</taxon>
        <taxon>Magnoliopsida</taxon>
        <taxon>eudicotyledons</taxon>
        <taxon>Gunneridae</taxon>
        <taxon>Pentapetalae</taxon>
        <taxon>rosids</taxon>
        <taxon>fabids</taxon>
        <taxon>Fagales</taxon>
        <taxon>Betulaceae</taxon>
        <taxon>Alnus</taxon>
    </lineage>
</organism>
<gene>
    <name evidence="1" type="primary">rbcL</name>
</gene>
<name>RBL_ALNIN</name>
<reference key="1">
    <citation type="journal article" date="1992" name="Mol. Biol. Evol.">
        <title>Complete congruence between morphological and rbcL-based molecular phylogenies in birches and related species (Betulaceae).</title>
        <authorList>
            <person name="Bousquet J."/>
            <person name="Strauss S.H."/>
            <person name="Li P."/>
        </authorList>
    </citation>
    <scope>NUCLEOTIDE SEQUENCE [GENOMIC DNA]</scope>
    <source>
        <tissue>Leaf</tissue>
    </source>
</reference>
<keyword id="KW-0007">Acetylation</keyword>
<keyword id="KW-0113">Calvin cycle</keyword>
<keyword id="KW-0120">Carbon dioxide fixation</keyword>
<keyword id="KW-0150">Chloroplast</keyword>
<keyword id="KW-1015">Disulfide bond</keyword>
<keyword id="KW-0456">Lyase</keyword>
<keyword id="KW-0460">Magnesium</keyword>
<keyword id="KW-0479">Metal-binding</keyword>
<keyword id="KW-0488">Methylation</keyword>
<keyword id="KW-0503">Monooxygenase</keyword>
<keyword id="KW-0560">Oxidoreductase</keyword>
<keyword id="KW-0601">Photorespiration</keyword>
<keyword id="KW-0602">Photosynthesis</keyword>
<keyword id="KW-0934">Plastid</keyword>